<protein>
    <recommendedName>
        <fullName evidence="2">Early transcription factor large subunit homolog</fullName>
        <shortName>pG1340L</shortName>
    </recommendedName>
    <alternativeName>
        <fullName evidence="2">VETFL homolog</fullName>
    </alternativeName>
</protein>
<reference key="1">
    <citation type="submission" date="2003-03" db="EMBL/GenBank/DDBJ databases">
        <title>African swine fever virus genomes.</title>
        <authorList>
            <person name="Kutish G.F."/>
            <person name="Rock D.L."/>
        </authorList>
    </citation>
    <scope>NUCLEOTIDE SEQUENCE [GENOMIC DNA]</scope>
</reference>
<name>EFTL_ASFP4</name>
<proteinExistence type="inferred from homology"/>
<evidence type="ECO:0000250" key="1">
    <source>
        <dbReference type="UniProtKB" id="P20636"/>
    </source>
</evidence>
<evidence type="ECO:0000250" key="2">
    <source>
        <dbReference type="UniProtKB" id="Q65177"/>
    </source>
</evidence>
<evidence type="ECO:0000305" key="3"/>
<dbReference type="EMBL" id="AY261363">
    <property type="status" value="NOT_ANNOTATED_CDS"/>
    <property type="molecule type" value="Genomic_DNA"/>
</dbReference>
<dbReference type="Proteomes" id="UP000000859">
    <property type="component" value="Segment"/>
</dbReference>
<dbReference type="GO" id="GO:0044423">
    <property type="term" value="C:virion component"/>
    <property type="evidence" value="ECO:0007669"/>
    <property type="project" value="UniProtKB-KW"/>
</dbReference>
<dbReference type="CDD" id="cd17039">
    <property type="entry name" value="Ubl_ubiquitin_like"/>
    <property type="match status" value="1"/>
</dbReference>
<keyword id="KW-0804">Transcription</keyword>
<keyword id="KW-0805">Transcription regulation</keyword>
<keyword id="KW-0946">Virion</keyword>
<gene>
    <name type="ordered locus">Pret-101</name>
</gene>
<comment type="function">
    <text evidence="1">Putative initation factor.</text>
</comment>
<comment type="subcellular location">
    <subcellularLocation>
        <location evidence="2">Virion</location>
    </subcellularLocation>
    <text evidence="2">Found in association with viral nucleoid.</text>
</comment>
<comment type="similarity">
    <text evidence="3">Belongs to the asfivirus G1340L family.</text>
</comment>
<accession>P0CA42</accession>
<organism>
    <name type="scientific">African swine fever virus (isolate Tick/South Africa/Pretoriuskop Pr4/1996)</name>
    <name type="common">ASFV</name>
    <dbReference type="NCBI Taxonomy" id="561443"/>
    <lineage>
        <taxon>Viruses</taxon>
        <taxon>Varidnaviria</taxon>
        <taxon>Bamfordvirae</taxon>
        <taxon>Nucleocytoviricota</taxon>
        <taxon>Pokkesviricetes</taxon>
        <taxon>Asfuvirales</taxon>
        <taxon>Asfarviridae</taxon>
        <taxon>Asfivirus</taxon>
        <taxon>African swine fever virus</taxon>
    </lineage>
</organism>
<organismHost>
    <name type="scientific">Ornithodoros</name>
    <name type="common">relapsing fever ticks</name>
    <dbReference type="NCBI Taxonomy" id="6937"/>
</organismHost>
<organismHost>
    <name type="scientific">Phacochoerus aethiopicus</name>
    <name type="common">Warthog</name>
    <dbReference type="NCBI Taxonomy" id="85517"/>
</organismHost>
<organismHost>
    <name type="scientific">Phacochoerus africanus</name>
    <name type="common">Warthog</name>
    <dbReference type="NCBI Taxonomy" id="41426"/>
</organismHost>
<organismHost>
    <name type="scientific">Potamochoerus larvatus</name>
    <name type="common">Bushpig</name>
    <dbReference type="NCBI Taxonomy" id="273792"/>
</organismHost>
<organismHost>
    <name type="scientific">Sus scrofa</name>
    <name type="common">Pig</name>
    <dbReference type="NCBI Taxonomy" id="9823"/>
</organismHost>
<sequence>MDFQNDFLTNPLRVTLYNPAENEYTKTFIFLGSVPANVLQACRKDLQRTPKDKEILQNFYGEDWEKKLSQYVVGGDGDDLDEFEKLFVEDSGEETNVMMPEIETMYSEYSIFPEDTFKDIREKIYVATGIPPYRQHIFFFQNNTLQVTYRLLLSGSGVALDIRDYKKEFQQVGGLNIDASMESQKDELYVEALDSFQLIKNIHHIFVADLNTLVAPMRRQISIAIEDNYQFDLLYYGLIMKYWPLLSPDAFKLLVQSPLQMEKQYPALSPSLTSLKKRLLLEQKLINFTYARAQQVIAKYEGNRLTRGTLAVTSAMIKISPLVNIQINVRNVFDLFPATPDIPQLVVFFYSKTGPTVVSKHHITSTEPEKFSNKTFRVPTIILIRFINKKAFILTIQNNGHYFIESNWSENERHDFNSVVSTLNNFINPIIHTINDMGPAAFPRGGSLPLPSNEDIQISISSMSVSTFWPYTLSSKGFTELKSRWREYEQAGIISVRGLQQTGVYNFLFKKGIYSYDPHEIERMIIISSGPGRKMDINVALLQNTYAYLFDTNVAARWETIYGGRNIRIYHRVTDIKIEMFNITQEEFNYLWVYLFVFLDNLITGPDKILVNKLSQLHDKQQGKGASQLRALQEQDPDLYDLRKYDTQATVYSVLCQHPRPPVIYSEAEVKSMPPAKRKELVKYWNFTEGVPAYYSCPHPDYPHLSLLEGRHPLNYCLPCCQKTKALLGTKRFYINNTCLTKHTFVEQDLEDLNTQTSRHTLSYGKKIPVNRIAFLPHQIADELFLNTIKEPDIFCIVGVEQTMLGISNAGLFYSLARILDLAPKALAIEIAKAANTPQYYILGNGAGNMFSSGAELASLILQTFVEQKNQLLQWDTTWQDIFLDLVAICYDLHCVFFKDKQGDFEFEVSPNTIQKILSPSKKIAIIFDTDEGIYPMAITQQKRFLKNSEAQYIFTEDDPVMEVIQSMSEFMCKDNWWDIHDVKNIPGYTVGKKLINRHNFCYALLIDSDTDRPIYFPIRLSSYIHDDIPIDFDLRPTQIASFKETWKFITLFNKQYKQYEIIPSAVLQNIKKEFVGFLSEGKTGLYFYYAPTQTLPAALEKLPIATLTIDPRDIDQAILYPLEEPYPQQNKANKAFYINHLYKFLLIEFFDVLYGLQSNTTRKHIENLFQKTDFQKITSVTEFYTKLSDFVDLNDIHTIKHILETTDAEHALKVLQKNIFNFDYTLLSPLQSYTYDELCQHLKKLLTPRIEFYEDIETIDRGLINIYTSCQYSTLNQPQCEKKRLRIPVNHFENYIHILAADILNPLKHSTLLLTGLGVIDDLQFILRPQEIISVKNKF</sequence>
<feature type="chain" id="PRO_0000373513" description="Early transcription factor large subunit homolog">
    <location>
        <begin position="1"/>
        <end position="1340"/>
    </location>
</feature>